<sequence length="628" mass="70247">MFNLRNFDVIVVGAGHAGTEAAMASSRMGCKTLLLTQKISDLGALSCNPAIGGIGKSHLVKEIDALGGMMAKAIDYSGIQFRILNSSKGPAVRSTRAQADKILYHETVKKILKKQNNLLILEAEVKDLIFKNYSVVGVLTQNEINFYSRSVVLAAGTFLGGKIHIGLKSYSAGRIGDKSAIDLSVRLRELSLRVNRLKTGTPPRIDINTVNFNNLLIQNSDTPVPVFSFMGNVSHHPKQIPCYLTHTNEKTHEIIRKNLDKSPIYTGFLKGLGPRYCPSIEDKIVRFPDRKSHQVFLEPEGLSSIKVYPNGISTSLPIEVQEQIVASIKGLEKSKIIRPGYAIEYDFFDPKDLNLTLESKLIKGLFFAGQINGTTGYEEAASQGLLAGLNAALSSKNTEGWFPRRDQAYLGVLIDDLTTQGTEEPYRMFTSRAEYRLSLREDNADLRLTEIGRKLGLVNDSRWIRYNQKVLNIQTEMNRLKKNKISPISPDADILKKLYNINLIKEISMSELLKRPQIRYQDLQSLESFRTGIVDLEAIGQIENEIKYAGYIKRQSEEIERHLKNENTFLSSICDYNKIRGLSSEVVKKLNDYKPISIGQASRISGITPAAISILLIHLKKESYKHTL</sequence>
<keyword id="KW-0963">Cytoplasm</keyword>
<keyword id="KW-0274">FAD</keyword>
<keyword id="KW-0285">Flavoprotein</keyword>
<keyword id="KW-0520">NAD</keyword>
<keyword id="KW-0819">tRNA processing</keyword>
<organism>
    <name type="scientific">Buchnera aphidicola subsp. Acyrthosiphon pisum (strain Tuc7)</name>
    <dbReference type="NCBI Taxonomy" id="561501"/>
    <lineage>
        <taxon>Bacteria</taxon>
        <taxon>Pseudomonadati</taxon>
        <taxon>Pseudomonadota</taxon>
        <taxon>Gammaproteobacteria</taxon>
        <taxon>Enterobacterales</taxon>
        <taxon>Erwiniaceae</taxon>
        <taxon>Buchnera</taxon>
    </lineage>
</organism>
<comment type="function">
    <text evidence="1">NAD-binding protein involved in the addition of a carboxymethylaminomethyl (cmnm) group at the wobble position (U34) of certain tRNAs, forming tRNA-cmnm(5)s(2)U34.</text>
</comment>
<comment type="cofactor">
    <cofactor evidence="1">
        <name>FAD</name>
        <dbReference type="ChEBI" id="CHEBI:57692"/>
    </cofactor>
</comment>
<comment type="subunit">
    <text evidence="1">Homodimer. Heterotetramer of two MnmE and two MnmG subunits.</text>
</comment>
<comment type="subcellular location">
    <subcellularLocation>
        <location evidence="1">Cytoplasm</location>
    </subcellularLocation>
</comment>
<comment type="similarity">
    <text evidence="1">Belongs to the MnmG family.</text>
</comment>
<gene>
    <name evidence="1" type="primary">mnmG</name>
    <name evidence="1" type="synonym">gidA</name>
    <name type="ordered locus">BUAPTUC7_001</name>
</gene>
<accession>B8D6S0</accession>
<name>MNMG_BUCAT</name>
<feature type="chain" id="PRO_1000122743" description="tRNA uridine 5-carboxymethylaminomethyl modification enzyme MnmG">
    <location>
        <begin position="1"/>
        <end position="628"/>
    </location>
</feature>
<feature type="binding site" evidence="1">
    <location>
        <begin position="13"/>
        <end position="18"/>
    </location>
    <ligand>
        <name>FAD</name>
        <dbReference type="ChEBI" id="CHEBI:57692"/>
    </ligand>
</feature>
<feature type="binding site" evidence="1">
    <location>
        <begin position="273"/>
        <end position="287"/>
    </location>
    <ligand>
        <name>NAD(+)</name>
        <dbReference type="ChEBI" id="CHEBI:57540"/>
    </ligand>
</feature>
<evidence type="ECO:0000255" key="1">
    <source>
        <dbReference type="HAMAP-Rule" id="MF_00129"/>
    </source>
</evidence>
<proteinExistence type="inferred from homology"/>
<dbReference type="EMBL" id="CP001158">
    <property type="protein sequence ID" value="ACL29835.1"/>
    <property type="molecule type" value="Genomic_DNA"/>
</dbReference>
<dbReference type="RefSeq" id="WP_012619398.1">
    <property type="nucleotide sequence ID" value="NC_011834.1"/>
</dbReference>
<dbReference type="SMR" id="B8D6S0"/>
<dbReference type="KEGG" id="bau:BUAPTUC7_001"/>
<dbReference type="HOGENOM" id="CLU_007831_2_2_6"/>
<dbReference type="GO" id="GO:0005829">
    <property type="term" value="C:cytosol"/>
    <property type="evidence" value="ECO:0007669"/>
    <property type="project" value="TreeGrafter"/>
</dbReference>
<dbReference type="GO" id="GO:0050660">
    <property type="term" value="F:flavin adenine dinucleotide binding"/>
    <property type="evidence" value="ECO:0007669"/>
    <property type="project" value="UniProtKB-UniRule"/>
</dbReference>
<dbReference type="GO" id="GO:0030488">
    <property type="term" value="P:tRNA methylation"/>
    <property type="evidence" value="ECO:0007669"/>
    <property type="project" value="TreeGrafter"/>
</dbReference>
<dbReference type="GO" id="GO:0002098">
    <property type="term" value="P:tRNA wobble uridine modification"/>
    <property type="evidence" value="ECO:0007669"/>
    <property type="project" value="InterPro"/>
</dbReference>
<dbReference type="FunFam" id="1.10.10.1800:FF:000001">
    <property type="entry name" value="tRNA uridine 5-carboxymethylaminomethyl modification enzyme MnmG"/>
    <property type="match status" value="1"/>
</dbReference>
<dbReference type="FunFam" id="1.10.150.570:FF:000001">
    <property type="entry name" value="tRNA uridine 5-carboxymethylaminomethyl modification enzyme MnmG"/>
    <property type="match status" value="1"/>
</dbReference>
<dbReference type="FunFam" id="3.50.50.60:FF:000002">
    <property type="entry name" value="tRNA uridine 5-carboxymethylaminomethyl modification enzyme MnmG"/>
    <property type="match status" value="1"/>
</dbReference>
<dbReference type="FunFam" id="3.50.50.60:FF:000010">
    <property type="entry name" value="tRNA uridine 5-carboxymethylaminomethyl modification enzyme MnmG"/>
    <property type="match status" value="1"/>
</dbReference>
<dbReference type="Gene3D" id="3.50.50.60">
    <property type="entry name" value="FAD/NAD(P)-binding domain"/>
    <property type="match status" value="2"/>
</dbReference>
<dbReference type="Gene3D" id="1.10.150.570">
    <property type="entry name" value="GidA associated domain, C-terminal subdomain"/>
    <property type="match status" value="1"/>
</dbReference>
<dbReference type="Gene3D" id="1.10.10.1800">
    <property type="entry name" value="tRNA uridine 5-carboxymethylaminomethyl modification enzyme MnmG/GidA"/>
    <property type="match status" value="1"/>
</dbReference>
<dbReference type="HAMAP" id="MF_00129">
    <property type="entry name" value="MnmG_GidA"/>
    <property type="match status" value="1"/>
</dbReference>
<dbReference type="InterPro" id="IPR036188">
    <property type="entry name" value="FAD/NAD-bd_sf"/>
</dbReference>
<dbReference type="InterPro" id="IPR049312">
    <property type="entry name" value="GIDA_C_N"/>
</dbReference>
<dbReference type="InterPro" id="IPR004416">
    <property type="entry name" value="MnmG"/>
</dbReference>
<dbReference type="InterPro" id="IPR002218">
    <property type="entry name" value="MnmG-rel"/>
</dbReference>
<dbReference type="InterPro" id="IPR020595">
    <property type="entry name" value="MnmG-rel_CS"/>
</dbReference>
<dbReference type="InterPro" id="IPR026904">
    <property type="entry name" value="MnmG_C"/>
</dbReference>
<dbReference type="InterPro" id="IPR047001">
    <property type="entry name" value="MnmG_C_subdom"/>
</dbReference>
<dbReference type="InterPro" id="IPR044920">
    <property type="entry name" value="MnmG_C_subdom_sf"/>
</dbReference>
<dbReference type="InterPro" id="IPR040131">
    <property type="entry name" value="MnmG_N"/>
</dbReference>
<dbReference type="NCBIfam" id="TIGR00136">
    <property type="entry name" value="mnmG_gidA"/>
    <property type="match status" value="1"/>
</dbReference>
<dbReference type="PANTHER" id="PTHR11806">
    <property type="entry name" value="GLUCOSE INHIBITED DIVISION PROTEIN A"/>
    <property type="match status" value="1"/>
</dbReference>
<dbReference type="PANTHER" id="PTHR11806:SF0">
    <property type="entry name" value="PROTEIN MTO1 HOMOLOG, MITOCHONDRIAL"/>
    <property type="match status" value="1"/>
</dbReference>
<dbReference type="Pfam" id="PF01134">
    <property type="entry name" value="GIDA"/>
    <property type="match status" value="1"/>
</dbReference>
<dbReference type="Pfam" id="PF21680">
    <property type="entry name" value="GIDA_C_1st"/>
    <property type="match status" value="1"/>
</dbReference>
<dbReference type="Pfam" id="PF13932">
    <property type="entry name" value="SAM_GIDA_C"/>
    <property type="match status" value="1"/>
</dbReference>
<dbReference type="SMART" id="SM01228">
    <property type="entry name" value="GIDA_assoc_3"/>
    <property type="match status" value="1"/>
</dbReference>
<dbReference type="SUPFAM" id="SSF51905">
    <property type="entry name" value="FAD/NAD(P)-binding domain"/>
    <property type="match status" value="1"/>
</dbReference>
<dbReference type="PROSITE" id="PS01280">
    <property type="entry name" value="GIDA_1"/>
    <property type="match status" value="1"/>
</dbReference>
<dbReference type="PROSITE" id="PS01281">
    <property type="entry name" value="GIDA_2"/>
    <property type="match status" value="1"/>
</dbReference>
<reference key="1">
    <citation type="journal article" date="2009" name="Science">
        <title>The dynamics and time scale of ongoing genomic erosion in symbiotic bacteria.</title>
        <authorList>
            <person name="Moran N.A."/>
            <person name="McLaughlin H.J."/>
            <person name="Sorek R."/>
        </authorList>
    </citation>
    <scope>NUCLEOTIDE SEQUENCE [LARGE SCALE GENOMIC DNA]</scope>
    <source>
        <strain>Tuc7</strain>
    </source>
</reference>
<protein>
    <recommendedName>
        <fullName evidence="1">tRNA uridine 5-carboxymethylaminomethyl modification enzyme MnmG</fullName>
    </recommendedName>
    <alternativeName>
        <fullName evidence="1">Glucose-inhibited division protein A</fullName>
    </alternativeName>
</protein>